<sequence>MNITQLQILAAVVETGNFSAAALQLDLSQSAVSRAIAALEDELGVVLLSRGRFGARPTRVGERVLQLAQRMLQLHDSIVHEVNLEKGLQGGHLRIASFRSAATHVLPPRLALFRQRCPGVSVSIIETDPQGVEQALREGKVDIGLLPLPRSEEFDTWEITRDEYVVLLPSTAHPLGQPLTWAQLSRYEFILYNYAECTTAVRQHWATARQELKVAYEIKEDSTIVSMVAQGLGAAILPRLAAVPIPPEVAAHSLPIPLERVIGAAILASALQVPSVFAFLDVLRQTAPEVRATG</sequence>
<dbReference type="EMBL" id="L41665">
    <property type="protein sequence ID" value="AAB38541.1"/>
    <property type="molecule type" value="Genomic_DNA"/>
</dbReference>
<dbReference type="EMBL" id="CP000100">
    <property type="protein sequence ID" value="ABB58448.1"/>
    <property type="molecule type" value="Genomic_DNA"/>
</dbReference>
<dbReference type="RefSeq" id="WP_011243998.1">
    <property type="nucleotide sequence ID" value="NZ_JACJTX010000001.1"/>
</dbReference>
<dbReference type="SMR" id="P52691"/>
<dbReference type="STRING" id="1140.Synpcc7942_2418"/>
<dbReference type="PaxDb" id="1140-Synpcc7942_2418"/>
<dbReference type="KEGG" id="syf:Synpcc7942_2418"/>
<dbReference type="eggNOG" id="COG0583">
    <property type="taxonomic scope" value="Bacteria"/>
</dbReference>
<dbReference type="HOGENOM" id="CLU_039613_6_0_3"/>
<dbReference type="OrthoDB" id="63123at2"/>
<dbReference type="BioCyc" id="SYNEL:SYNPCC7942_2418-MONOMER"/>
<dbReference type="Proteomes" id="UP000889800">
    <property type="component" value="Chromosome"/>
</dbReference>
<dbReference type="GO" id="GO:0005829">
    <property type="term" value="C:cytosol"/>
    <property type="evidence" value="ECO:0007669"/>
    <property type="project" value="TreeGrafter"/>
</dbReference>
<dbReference type="GO" id="GO:0003677">
    <property type="term" value="F:DNA binding"/>
    <property type="evidence" value="ECO:0007669"/>
    <property type="project" value="UniProtKB-KW"/>
</dbReference>
<dbReference type="GO" id="GO:0003700">
    <property type="term" value="F:DNA-binding transcription factor activity"/>
    <property type="evidence" value="ECO:0007669"/>
    <property type="project" value="InterPro"/>
</dbReference>
<dbReference type="CDD" id="cd05466">
    <property type="entry name" value="PBP2_LTTR_substrate"/>
    <property type="match status" value="1"/>
</dbReference>
<dbReference type="FunFam" id="1.10.10.10:FF:000001">
    <property type="entry name" value="LysR family transcriptional regulator"/>
    <property type="match status" value="1"/>
</dbReference>
<dbReference type="Gene3D" id="3.40.190.290">
    <property type="match status" value="1"/>
</dbReference>
<dbReference type="Gene3D" id="1.10.10.10">
    <property type="entry name" value="Winged helix-like DNA-binding domain superfamily/Winged helix DNA-binding domain"/>
    <property type="match status" value="1"/>
</dbReference>
<dbReference type="InterPro" id="IPR050950">
    <property type="entry name" value="HTH-type_LysR_regulators"/>
</dbReference>
<dbReference type="InterPro" id="IPR005119">
    <property type="entry name" value="LysR_subst-bd"/>
</dbReference>
<dbReference type="InterPro" id="IPR000847">
    <property type="entry name" value="Tscrpt_reg_HTH_LysR"/>
</dbReference>
<dbReference type="InterPro" id="IPR036388">
    <property type="entry name" value="WH-like_DNA-bd_sf"/>
</dbReference>
<dbReference type="InterPro" id="IPR036390">
    <property type="entry name" value="WH_DNA-bd_sf"/>
</dbReference>
<dbReference type="PANTHER" id="PTHR30419">
    <property type="entry name" value="HTH-TYPE TRANSCRIPTIONAL REGULATOR YBHD"/>
    <property type="match status" value="1"/>
</dbReference>
<dbReference type="Pfam" id="PF00126">
    <property type="entry name" value="HTH_1"/>
    <property type="match status" value="1"/>
</dbReference>
<dbReference type="Pfam" id="PF03466">
    <property type="entry name" value="LysR_substrate"/>
    <property type="match status" value="1"/>
</dbReference>
<dbReference type="PRINTS" id="PR00039">
    <property type="entry name" value="HTHLYSR"/>
</dbReference>
<dbReference type="SUPFAM" id="SSF53850">
    <property type="entry name" value="Periplasmic binding protein-like II"/>
    <property type="match status" value="1"/>
</dbReference>
<dbReference type="SUPFAM" id="SSF46785">
    <property type="entry name" value="Winged helix' DNA-binding domain"/>
    <property type="match status" value="1"/>
</dbReference>
<dbReference type="PROSITE" id="PS50931">
    <property type="entry name" value="HTH_LYSR"/>
    <property type="match status" value="1"/>
</dbReference>
<protein>
    <recommendedName>
        <fullName>Probable HTH-type transcriptional regulator LrrA</fullName>
    </recommendedName>
</protein>
<proteinExistence type="inferred from homology"/>
<reference key="1">
    <citation type="journal article" date="1996" name="Arch. Microbiol.">
        <title>Identification of two classes of transcriptional regulator genes in the cyanobacterium Synechococcus sp. strain PCC 7942.</title>
        <authorList>
            <person name="Anandan S."/>
            <person name="Nalty M.S."/>
            <person name="Cogdell D.E."/>
            <person name="Golden S.S."/>
        </authorList>
    </citation>
    <scope>NUCLEOTIDE SEQUENCE [GENOMIC DNA]</scope>
</reference>
<reference key="2">
    <citation type="submission" date="2005-08" db="EMBL/GenBank/DDBJ databases">
        <title>Complete sequence of chromosome 1 of Synechococcus elongatus PCC 7942.</title>
        <authorList>
            <consortium name="US DOE Joint Genome Institute"/>
            <person name="Copeland A."/>
            <person name="Lucas S."/>
            <person name="Lapidus A."/>
            <person name="Barry K."/>
            <person name="Detter J.C."/>
            <person name="Glavina T."/>
            <person name="Hammon N."/>
            <person name="Israni S."/>
            <person name="Pitluck S."/>
            <person name="Schmutz J."/>
            <person name="Larimer F."/>
            <person name="Land M."/>
            <person name="Kyrpides N."/>
            <person name="Lykidis A."/>
            <person name="Golden S."/>
            <person name="Richardson P."/>
        </authorList>
    </citation>
    <scope>NUCLEOTIDE SEQUENCE [LARGE SCALE GENOMIC DNA]</scope>
    <source>
        <strain>ATCC 33912 / PCC 7942 / FACHB-805</strain>
    </source>
</reference>
<feature type="chain" id="PRO_0000105665" description="Probable HTH-type transcriptional regulator LrrA">
    <location>
        <begin position="1"/>
        <end position="294"/>
    </location>
</feature>
<feature type="domain" description="HTH lysR-type" evidence="1">
    <location>
        <begin position="1"/>
        <end position="58"/>
    </location>
</feature>
<feature type="DNA-binding region" description="H-T-H motif" evidence="1">
    <location>
        <begin position="18"/>
        <end position="37"/>
    </location>
</feature>
<feature type="sequence conflict" description="In Ref. 1; AAB38541." evidence="2" ref="1">
    <original>L</original>
    <variation>F</variation>
    <location>
        <position position="9"/>
    </location>
</feature>
<accession>P52691</accession>
<accession>Q31KH1</accession>
<keyword id="KW-0238">DNA-binding</keyword>
<keyword id="KW-1185">Reference proteome</keyword>
<keyword id="KW-0804">Transcription</keyword>
<keyword id="KW-0805">Transcription regulation</keyword>
<gene>
    <name type="primary">lrrA</name>
    <name type="ordered locus">Synpcc7942_2418</name>
</gene>
<comment type="similarity">
    <text evidence="2">Belongs to the LysR transcriptional regulatory family.</text>
</comment>
<name>LRRA_SYNE7</name>
<organism>
    <name type="scientific">Synechococcus elongatus (strain ATCC 33912 / PCC 7942 / FACHB-805)</name>
    <name type="common">Anacystis nidulans R2</name>
    <dbReference type="NCBI Taxonomy" id="1140"/>
    <lineage>
        <taxon>Bacteria</taxon>
        <taxon>Bacillati</taxon>
        <taxon>Cyanobacteriota</taxon>
        <taxon>Cyanophyceae</taxon>
        <taxon>Synechococcales</taxon>
        <taxon>Synechococcaceae</taxon>
        <taxon>Synechococcus</taxon>
    </lineage>
</organism>
<evidence type="ECO:0000255" key="1">
    <source>
        <dbReference type="PROSITE-ProRule" id="PRU00253"/>
    </source>
</evidence>
<evidence type="ECO:0000305" key="2"/>